<organism>
    <name type="scientific">Erwinia tasmaniensis (strain DSM 17950 / CFBP 7177 / CIP 109463 / NCPPB 4357 / Et1/99)</name>
    <dbReference type="NCBI Taxonomy" id="465817"/>
    <lineage>
        <taxon>Bacteria</taxon>
        <taxon>Pseudomonadati</taxon>
        <taxon>Pseudomonadota</taxon>
        <taxon>Gammaproteobacteria</taxon>
        <taxon>Enterobacterales</taxon>
        <taxon>Erwiniaceae</taxon>
        <taxon>Erwinia</taxon>
    </lineage>
</organism>
<reference key="1">
    <citation type="journal article" date="2008" name="Environ. Microbiol.">
        <title>The genome of Erwinia tasmaniensis strain Et1/99, a non-pathogenic bacterium in the genus Erwinia.</title>
        <authorList>
            <person name="Kube M."/>
            <person name="Migdoll A.M."/>
            <person name="Mueller I."/>
            <person name="Kuhl H."/>
            <person name="Beck A."/>
            <person name="Reinhardt R."/>
            <person name="Geider K."/>
        </authorList>
    </citation>
    <scope>NUCLEOTIDE SEQUENCE [LARGE SCALE GENOMIC DNA]</scope>
    <source>
        <strain>DSM 17950 / CFBP 7177 / CIP 109463 / NCPPB 4357 / Et1/99</strain>
    </source>
</reference>
<dbReference type="EC" id="7.1.1.-" evidence="1"/>
<dbReference type="EMBL" id="CU468135">
    <property type="protein sequence ID" value="CAO96259.1"/>
    <property type="molecule type" value="Genomic_DNA"/>
</dbReference>
<dbReference type="RefSeq" id="WP_012440954.1">
    <property type="nucleotide sequence ID" value="NC_010694.1"/>
</dbReference>
<dbReference type="SMR" id="B2VIN4"/>
<dbReference type="STRING" id="465817.ETA_12130"/>
<dbReference type="GeneID" id="92237548"/>
<dbReference type="KEGG" id="eta:ETA_12130"/>
<dbReference type="eggNOG" id="COG0713">
    <property type="taxonomic scope" value="Bacteria"/>
</dbReference>
<dbReference type="HOGENOM" id="CLU_144724_0_1_6"/>
<dbReference type="OrthoDB" id="9801357at2"/>
<dbReference type="Proteomes" id="UP000001726">
    <property type="component" value="Chromosome"/>
</dbReference>
<dbReference type="GO" id="GO:0030964">
    <property type="term" value="C:NADH dehydrogenase complex"/>
    <property type="evidence" value="ECO:0007669"/>
    <property type="project" value="TreeGrafter"/>
</dbReference>
<dbReference type="GO" id="GO:0005886">
    <property type="term" value="C:plasma membrane"/>
    <property type="evidence" value="ECO:0007669"/>
    <property type="project" value="UniProtKB-SubCell"/>
</dbReference>
<dbReference type="GO" id="GO:0050136">
    <property type="term" value="F:NADH:ubiquinone reductase (non-electrogenic) activity"/>
    <property type="evidence" value="ECO:0007669"/>
    <property type="project" value="UniProtKB-UniRule"/>
</dbReference>
<dbReference type="GO" id="GO:0048038">
    <property type="term" value="F:quinone binding"/>
    <property type="evidence" value="ECO:0007669"/>
    <property type="project" value="UniProtKB-KW"/>
</dbReference>
<dbReference type="GO" id="GO:0042773">
    <property type="term" value="P:ATP synthesis coupled electron transport"/>
    <property type="evidence" value="ECO:0007669"/>
    <property type="project" value="InterPro"/>
</dbReference>
<dbReference type="FunFam" id="1.10.287.3510:FF:000001">
    <property type="entry name" value="NADH-quinone oxidoreductase subunit K"/>
    <property type="match status" value="1"/>
</dbReference>
<dbReference type="Gene3D" id="1.10.287.3510">
    <property type="match status" value="1"/>
</dbReference>
<dbReference type="HAMAP" id="MF_01456">
    <property type="entry name" value="NDH1_NuoK"/>
    <property type="match status" value="1"/>
</dbReference>
<dbReference type="InterPro" id="IPR001133">
    <property type="entry name" value="NADH_UbQ_OxRdtase_chain4L/K"/>
</dbReference>
<dbReference type="InterPro" id="IPR039428">
    <property type="entry name" value="NUOK/Mnh_C1-like"/>
</dbReference>
<dbReference type="NCBIfam" id="NF004319">
    <property type="entry name" value="PRK05715.1-1"/>
    <property type="match status" value="1"/>
</dbReference>
<dbReference type="NCBIfam" id="NF004320">
    <property type="entry name" value="PRK05715.1-2"/>
    <property type="match status" value="1"/>
</dbReference>
<dbReference type="PANTHER" id="PTHR11434:SF16">
    <property type="entry name" value="NADH-UBIQUINONE OXIDOREDUCTASE CHAIN 4L"/>
    <property type="match status" value="1"/>
</dbReference>
<dbReference type="PANTHER" id="PTHR11434">
    <property type="entry name" value="NADH-UBIQUINONE OXIDOREDUCTASE SUBUNIT ND4L"/>
    <property type="match status" value="1"/>
</dbReference>
<dbReference type="Pfam" id="PF00420">
    <property type="entry name" value="Oxidored_q2"/>
    <property type="match status" value="1"/>
</dbReference>
<accession>B2VIN4</accession>
<gene>
    <name evidence="1" type="primary">nuoK</name>
    <name type="ordered locus">ETA_12130</name>
</gene>
<keyword id="KW-0997">Cell inner membrane</keyword>
<keyword id="KW-1003">Cell membrane</keyword>
<keyword id="KW-0472">Membrane</keyword>
<keyword id="KW-0520">NAD</keyword>
<keyword id="KW-0874">Quinone</keyword>
<keyword id="KW-1185">Reference proteome</keyword>
<keyword id="KW-1278">Translocase</keyword>
<keyword id="KW-0812">Transmembrane</keyword>
<keyword id="KW-1133">Transmembrane helix</keyword>
<keyword id="KW-0813">Transport</keyword>
<keyword id="KW-0830">Ubiquinone</keyword>
<evidence type="ECO:0000255" key="1">
    <source>
        <dbReference type="HAMAP-Rule" id="MF_01456"/>
    </source>
</evidence>
<feature type="chain" id="PRO_0000390039" description="NADH-quinone oxidoreductase subunit K">
    <location>
        <begin position="1"/>
        <end position="100"/>
    </location>
</feature>
<feature type="transmembrane region" description="Helical" evidence="1">
    <location>
        <begin position="2"/>
        <end position="22"/>
    </location>
</feature>
<feature type="transmembrane region" description="Helical" evidence="1">
    <location>
        <begin position="28"/>
        <end position="48"/>
    </location>
</feature>
<feature type="transmembrane region" description="Helical" evidence="1">
    <location>
        <begin position="60"/>
        <end position="80"/>
    </location>
</feature>
<proteinExistence type="inferred from homology"/>
<protein>
    <recommendedName>
        <fullName evidence="1">NADH-quinone oxidoreductase subunit K</fullName>
        <ecNumber evidence="1">7.1.1.-</ecNumber>
    </recommendedName>
    <alternativeName>
        <fullName evidence="1">NADH dehydrogenase I subunit K</fullName>
    </alternativeName>
    <alternativeName>
        <fullName evidence="1">NDH-1 subunit K</fullName>
    </alternativeName>
</protein>
<name>NUOK_ERWT9</name>
<comment type="function">
    <text evidence="1">NDH-1 shuttles electrons from NADH, via FMN and iron-sulfur (Fe-S) centers, to quinones in the respiratory chain. The immediate electron acceptor for the enzyme in this species is believed to be ubiquinone. Couples the redox reaction to proton translocation (for every two electrons transferred, four hydrogen ions are translocated across the cytoplasmic membrane), and thus conserves the redox energy in a proton gradient.</text>
</comment>
<comment type="catalytic activity">
    <reaction evidence="1">
        <text>a quinone + NADH + 5 H(+)(in) = a quinol + NAD(+) + 4 H(+)(out)</text>
        <dbReference type="Rhea" id="RHEA:57888"/>
        <dbReference type="ChEBI" id="CHEBI:15378"/>
        <dbReference type="ChEBI" id="CHEBI:24646"/>
        <dbReference type="ChEBI" id="CHEBI:57540"/>
        <dbReference type="ChEBI" id="CHEBI:57945"/>
        <dbReference type="ChEBI" id="CHEBI:132124"/>
    </reaction>
</comment>
<comment type="subunit">
    <text evidence="1">NDH-1 is composed of 13 different subunits. Subunits NuoA, H, J, K, L, M, N constitute the membrane sector of the complex.</text>
</comment>
<comment type="subcellular location">
    <subcellularLocation>
        <location evidence="1">Cell inner membrane</location>
        <topology evidence="1">Multi-pass membrane protein</topology>
    </subcellularLocation>
</comment>
<comment type="similarity">
    <text evidence="1">Belongs to the complex I subunit 4L family.</text>
</comment>
<sequence length="100" mass="10743">MIPLQHGLILAAILFVLGLTGVTIRRNLLFMLIGLEIMINAAALAFVVAGSYWGQADGQVMFILAISLAAAEASIGLALLLQLHRRSQNLNIDKVSEMRG</sequence>